<keyword id="KW-0240">DNA-directed RNA polymerase</keyword>
<keyword id="KW-0460">Magnesium</keyword>
<keyword id="KW-0479">Metal-binding</keyword>
<keyword id="KW-0548">Nucleotidyltransferase</keyword>
<keyword id="KW-1185">Reference proteome</keyword>
<keyword id="KW-0804">Transcription</keyword>
<keyword id="KW-0808">Transferase</keyword>
<keyword id="KW-0862">Zinc</keyword>
<proteinExistence type="inferred from homology"/>
<evidence type="ECO:0000255" key="1">
    <source>
        <dbReference type="HAMAP-Rule" id="MF_01322"/>
    </source>
</evidence>
<accession>P36252</accession>
<protein>
    <recommendedName>
        <fullName evidence="1">DNA-directed RNA polymerase subunit beta'</fullName>
        <shortName evidence="1">RNAP subunit beta'</shortName>
        <ecNumber evidence="1">2.7.7.6</ecNumber>
    </recommendedName>
    <alternativeName>
        <fullName evidence="1">RNA polymerase subunit beta'</fullName>
    </alternativeName>
    <alternativeName>
        <fullName evidence="1">Transcriptase subunit beta'</fullName>
    </alternativeName>
</protein>
<reference key="1">
    <citation type="journal article" date="1993" name="Nucleic Acids Res.">
        <title>The DNA-dependent RNA-polymerase of Thermotoga maritima; characterisation of the enzyme and the DNA-sequence of the genes for the large subunits.</title>
        <authorList>
            <person name="Palm P."/>
            <person name="Schleper C."/>
            <person name="Arnold-Ammer I."/>
            <person name="Holz I."/>
            <person name="Meier T."/>
            <person name="Lottspeich F."/>
            <person name="Zillig W."/>
        </authorList>
    </citation>
    <scope>NUCLEOTIDE SEQUENCE [GENOMIC DNA]</scope>
    <source>
        <strain>ATCC 43589 / DSM 3109 / JCM 10099 / NBRC 100826 / MSB8</strain>
    </source>
</reference>
<reference key="2">
    <citation type="journal article" date="1999" name="Nature">
        <title>Evidence for lateral gene transfer between Archaea and Bacteria from genome sequence of Thermotoga maritima.</title>
        <authorList>
            <person name="Nelson K.E."/>
            <person name="Clayton R.A."/>
            <person name="Gill S.R."/>
            <person name="Gwinn M.L."/>
            <person name="Dodson R.J."/>
            <person name="Haft D.H."/>
            <person name="Hickey E.K."/>
            <person name="Peterson J.D."/>
            <person name="Nelson W.C."/>
            <person name="Ketchum K.A."/>
            <person name="McDonald L.A."/>
            <person name="Utterback T.R."/>
            <person name="Malek J.A."/>
            <person name="Linher K.D."/>
            <person name="Garrett M.M."/>
            <person name="Stewart A.M."/>
            <person name="Cotton M.D."/>
            <person name="Pratt M.S."/>
            <person name="Phillips C.A."/>
            <person name="Richardson D.L."/>
            <person name="Heidelberg J.F."/>
            <person name="Sutton G.G."/>
            <person name="Fleischmann R.D."/>
            <person name="Eisen J.A."/>
            <person name="White O."/>
            <person name="Salzberg S.L."/>
            <person name="Smith H.O."/>
            <person name="Venter J.C."/>
            <person name="Fraser C.M."/>
        </authorList>
    </citation>
    <scope>NUCLEOTIDE SEQUENCE [LARGE SCALE GENOMIC DNA]</scope>
    <source>
        <strain>ATCC 43589 / DSM 3109 / JCM 10099 / NBRC 100826 / MSB8</strain>
    </source>
</reference>
<comment type="function">
    <text evidence="1">DNA-dependent RNA polymerase catalyzes the transcription of DNA into RNA using the four ribonucleoside triphosphates as substrates.</text>
</comment>
<comment type="catalytic activity">
    <reaction evidence="1">
        <text>RNA(n) + a ribonucleoside 5'-triphosphate = RNA(n+1) + diphosphate</text>
        <dbReference type="Rhea" id="RHEA:21248"/>
        <dbReference type="Rhea" id="RHEA-COMP:14527"/>
        <dbReference type="Rhea" id="RHEA-COMP:17342"/>
        <dbReference type="ChEBI" id="CHEBI:33019"/>
        <dbReference type="ChEBI" id="CHEBI:61557"/>
        <dbReference type="ChEBI" id="CHEBI:140395"/>
        <dbReference type="EC" id="2.7.7.6"/>
    </reaction>
</comment>
<comment type="cofactor">
    <cofactor evidence="1">
        <name>Mg(2+)</name>
        <dbReference type="ChEBI" id="CHEBI:18420"/>
    </cofactor>
    <text evidence="1">Binds 1 Mg(2+) ion per subunit.</text>
</comment>
<comment type="cofactor">
    <cofactor evidence="1">
        <name>Zn(2+)</name>
        <dbReference type="ChEBI" id="CHEBI:29105"/>
    </cofactor>
    <text evidence="1">Binds 2 Zn(2+) ions per subunit.</text>
</comment>
<comment type="subunit">
    <text evidence="1">The RNAP catalytic core consists of 2 alpha, 1 beta, 1 beta' and 1 omega subunit. When a sigma factor is associated with the core the holoenzyme is formed, which can initiate transcription.</text>
</comment>
<comment type="similarity">
    <text evidence="1">Belongs to the RNA polymerase beta' chain family.</text>
</comment>
<dbReference type="EC" id="2.7.7.6" evidence="1"/>
<dbReference type="EMBL" id="X72695">
    <property type="protein sequence ID" value="CAA51247.1"/>
    <property type="molecule type" value="Genomic_DNA"/>
</dbReference>
<dbReference type="EMBL" id="AE000512">
    <property type="protein sequence ID" value="AAD35544.1"/>
    <property type="molecule type" value="Genomic_DNA"/>
</dbReference>
<dbReference type="PIR" id="S41467">
    <property type="entry name" value="S41467"/>
</dbReference>
<dbReference type="RefSeq" id="NP_228269.1">
    <property type="nucleotide sequence ID" value="NC_000853.1"/>
</dbReference>
<dbReference type="RefSeq" id="WP_004081507.1">
    <property type="nucleotide sequence ID" value="NZ_CP011107.1"/>
</dbReference>
<dbReference type="SMR" id="P36252"/>
<dbReference type="FunCoup" id="P36252">
    <property type="interactions" value="329"/>
</dbReference>
<dbReference type="STRING" id="243274.TM_0459"/>
<dbReference type="PaxDb" id="243274-THEMA_02395"/>
<dbReference type="EnsemblBacteria" id="AAD35544">
    <property type="protein sequence ID" value="AAD35544"/>
    <property type="gene ID" value="TM_0459"/>
</dbReference>
<dbReference type="KEGG" id="tma:TM0459"/>
<dbReference type="KEGG" id="tmi:THEMA_02395"/>
<dbReference type="KEGG" id="tmw:THMA_0469"/>
<dbReference type="PATRIC" id="fig|243274.18.peg.471"/>
<dbReference type="eggNOG" id="COG0086">
    <property type="taxonomic scope" value="Bacteria"/>
</dbReference>
<dbReference type="InParanoid" id="P36252"/>
<dbReference type="OrthoDB" id="9815296at2"/>
<dbReference type="Proteomes" id="UP000008183">
    <property type="component" value="Chromosome"/>
</dbReference>
<dbReference type="GO" id="GO:0000428">
    <property type="term" value="C:DNA-directed RNA polymerase complex"/>
    <property type="evidence" value="ECO:0007669"/>
    <property type="project" value="UniProtKB-KW"/>
</dbReference>
<dbReference type="GO" id="GO:0003677">
    <property type="term" value="F:DNA binding"/>
    <property type="evidence" value="ECO:0007669"/>
    <property type="project" value="UniProtKB-UniRule"/>
</dbReference>
<dbReference type="GO" id="GO:0003899">
    <property type="term" value="F:DNA-directed RNA polymerase activity"/>
    <property type="evidence" value="ECO:0007669"/>
    <property type="project" value="UniProtKB-UniRule"/>
</dbReference>
<dbReference type="GO" id="GO:0000287">
    <property type="term" value="F:magnesium ion binding"/>
    <property type="evidence" value="ECO:0007669"/>
    <property type="project" value="UniProtKB-UniRule"/>
</dbReference>
<dbReference type="GO" id="GO:0008270">
    <property type="term" value="F:zinc ion binding"/>
    <property type="evidence" value="ECO:0007669"/>
    <property type="project" value="UniProtKB-UniRule"/>
</dbReference>
<dbReference type="GO" id="GO:0006351">
    <property type="term" value="P:DNA-templated transcription"/>
    <property type="evidence" value="ECO:0007669"/>
    <property type="project" value="UniProtKB-UniRule"/>
</dbReference>
<dbReference type="CDD" id="cd02655">
    <property type="entry name" value="RNAP_beta'_C"/>
    <property type="match status" value="1"/>
</dbReference>
<dbReference type="CDD" id="cd01609">
    <property type="entry name" value="RNAP_beta'_N"/>
    <property type="match status" value="1"/>
</dbReference>
<dbReference type="Gene3D" id="1.10.132.30">
    <property type="match status" value="1"/>
</dbReference>
<dbReference type="Gene3D" id="1.10.150.390">
    <property type="match status" value="1"/>
</dbReference>
<dbReference type="Gene3D" id="1.10.1790.20">
    <property type="match status" value="1"/>
</dbReference>
<dbReference type="Gene3D" id="1.10.40.90">
    <property type="match status" value="1"/>
</dbReference>
<dbReference type="Gene3D" id="2.40.40.20">
    <property type="match status" value="1"/>
</dbReference>
<dbReference type="Gene3D" id="2.40.50.100">
    <property type="match status" value="4"/>
</dbReference>
<dbReference type="Gene3D" id="4.10.860.120">
    <property type="entry name" value="RNA polymerase II, clamp domain"/>
    <property type="match status" value="1"/>
</dbReference>
<dbReference type="Gene3D" id="1.10.274.100">
    <property type="entry name" value="RNA polymerase Rpb1, domain 3"/>
    <property type="match status" value="2"/>
</dbReference>
<dbReference type="HAMAP" id="MF_01322">
    <property type="entry name" value="RNApol_bact_RpoC"/>
    <property type="match status" value="1"/>
</dbReference>
<dbReference type="InterPro" id="IPR045867">
    <property type="entry name" value="DNA-dir_RpoC_beta_prime"/>
</dbReference>
<dbReference type="InterPro" id="IPR012754">
    <property type="entry name" value="DNA-dir_RpoC_beta_prime_bact"/>
</dbReference>
<dbReference type="InterPro" id="IPR000722">
    <property type="entry name" value="RNA_pol_asu"/>
</dbReference>
<dbReference type="InterPro" id="IPR006592">
    <property type="entry name" value="RNA_pol_N"/>
</dbReference>
<dbReference type="InterPro" id="IPR007080">
    <property type="entry name" value="RNA_pol_Rpb1_1"/>
</dbReference>
<dbReference type="InterPro" id="IPR007066">
    <property type="entry name" value="RNA_pol_Rpb1_3"/>
</dbReference>
<dbReference type="InterPro" id="IPR042102">
    <property type="entry name" value="RNA_pol_Rpb1_3_sf"/>
</dbReference>
<dbReference type="InterPro" id="IPR007083">
    <property type="entry name" value="RNA_pol_Rpb1_4"/>
</dbReference>
<dbReference type="InterPro" id="IPR007081">
    <property type="entry name" value="RNA_pol_Rpb1_5"/>
</dbReference>
<dbReference type="InterPro" id="IPR044893">
    <property type="entry name" value="RNA_pol_Rpb1_clamp_domain"/>
</dbReference>
<dbReference type="InterPro" id="IPR038120">
    <property type="entry name" value="Rpb1_funnel_sf"/>
</dbReference>
<dbReference type="PANTHER" id="PTHR19376">
    <property type="entry name" value="DNA-DIRECTED RNA POLYMERASE"/>
    <property type="match status" value="1"/>
</dbReference>
<dbReference type="PANTHER" id="PTHR19376:SF54">
    <property type="entry name" value="DNA-DIRECTED RNA POLYMERASE SUBUNIT BETA"/>
    <property type="match status" value="1"/>
</dbReference>
<dbReference type="Pfam" id="PF04997">
    <property type="entry name" value="RNA_pol_Rpb1_1"/>
    <property type="match status" value="2"/>
</dbReference>
<dbReference type="Pfam" id="PF00623">
    <property type="entry name" value="RNA_pol_Rpb1_2"/>
    <property type="match status" value="2"/>
</dbReference>
<dbReference type="Pfam" id="PF04983">
    <property type="entry name" value="RNA_pol_Rpb1_3"/>
    <property type="match status" value="1"/>
</dbReference>
<dbReference type="Pfam" id="PF05000">
    <property type="entry name" value="RNA_pol_Rpb1_4"/>
    <property type="match status" value="1"/>
</dbReference>
<dbReference type="Pfam" id="PF04998">
    <property type="entry name" value="RNA_pol_Rpb1_5"/>
    <property type="match status" value="1"/>
</dbReference>
<dbReference type="SMART" id="SM00663">
    <property type="entry name" value="RPOLA_N"/>
    <property type="match status" value="1"/>
</dbReference>
<dbReference type="SUPFAM" id="SSF64484">
    <property type="entry name" value="beta and beta-prime subunits of DNA dependent RNA-polymerase"/>
    <property type="match status" value="1"/>
</dbReference>
<gene>
    <name evidence="1" type="primary">rpoC</name>
    <name type="ordered locus">TM_0459</name>
</gene>
<organism>
    <name type="scientific">Thermotoga maritima (strain ATCC 43589 / DSM 3109 / JCM 10099 / NBRC 100826 / MSB8)</name>
    <dbReference type="NCBI Taxonomy" id="243274"/>
    <lineage>
        <taxon>Bacteria</taxon>
        <taxon>Thermotogati</taxon>
        <taxon>Thermotogota</taxon>
        <taxon>Thermotogae</taxon>
        <taxon>Thermotogales</taxon>
        <taxon>Thermotogaceae</taxon>
        <taxon>Thermotoga</taxon>
    </lineage>
</organism>
<feature type="chain" id="PRO_0000067818" description="DNA-directed RNA polymerase subunit beta'">
    <location>
        <begin position="1"/>
        <end position="1690"/>
    </location>
</feature>
<feature type="binding site" evidence="1">
    <location>
        <position position="63"/>
    </location>
    <ligand>
        <name>Zn(2+)</name>
        <dbReference type="ChEBI" id="CHEBI:29105"/>
        <label>1</label>
    </ligand>
</feature>
<feature type="binding site" evidence="1">
    <location>
        <position position="65"/>
    </location>
    <ligand>
        <name>Zn(2+)</name>
        <dbReference type="ChEBI" id="CHEBI:29105"/>
        <label>1</label>
    </ligand>
</feature>
<feature type="binding site" evidence="1">
    <location>
        <position position="78"/>
    </location>
    <ligand>
        <name>Zn(2+)</name>
        <dbReference type="ChEBI" id="CHEBI:29105"/>
        <label>1</label>
    </ligand>
</feature>
<feature type="binding site" evidence="1">
    <location>
        <position position="81"/>
    </location>
    <ligand>
        <name>Zn(2+)</name>
        <dbReference type="ChEBI" id="CHEBI:29105"/>
        <label>1</label>
    </ligand>
</feature>
<feature type="binding site" evidence="1">
    <location>
        <position position="753"/>
    </location>
    <ligand>
        <name>Mg(2+)</name>
        <dbReference type="ChEBI" id="CHEBI:18420"/>
    </ligand>
</feature>
<feature type="binding site" evidence="1">
    <location>
        <position position="755"/>
    </location>
    <ligand>
        <name>Mg(2+)</name>
        <dbReference type="ChEBI" id="CHEBI:18420"/>
    </ligand>
</feature>
<feature type="binding site" evidence="1">
    <location>
        <position position="757"/>
    </location>
    <ligand>
        <name>Mg(2+)</name>
        <dbReference type="ChEBI" id="CHEBI:18420"/>
    </ligand>
</feature>
<feature type="binding site" evidence="1">
    <location>
        <position position="1107"/>
    </location>
    <ligand>
        <name>Zn(2+)</name>
        <dbReference type="ChEBI" id="CHEBI:29105"/>
        <label>2</label>
    </ligand>
</feature>
<feature type="binding site" evidence="1">
    <location>
        <position position="1295"/>
    </location>
    <ligand>
        <name>Zn(2+)</name>
        <dbReference type="ChEBI" id="CHEBI:29105"/>
        <label>2</label>
    </ligand>
</feature>
<feature type="binding site" evidence="1">
    <location>
        <position position="1302"/>
    </location>
    <ligand>
        <name>Zn(2+)</name>
        <dbReference type="ChEBI" id="CHEBI:29105"/>
        <label>2</label>
    </ligand>
</feature>
<feature type="binding site" evidence="1">
    <location>
        <position position="1305"/>
    </location>
    <ligand>
        <name>Zn(2+)</name>
        <dbReference type="ChEBI" id="CHEBI:29105"/>
        <label>2</label>
    </ligand>
</feature>
<sequence>MPMSSFKRKIKAIQIKIASPEVIRSWSGGEVKKPETINYRTFKPERDGLFCERIFGPVKDYECACGKYKGKKYEGTVCERCGVRVESREARRKRMGHIELAAPAVHIWYLESIPSVLGTLLNMSTSDLENIIYYGSRRVIERAFIVTDPKDTPFSQGDVIYETEYRIYRKKWDFDVEQAFVVKNPKSPVLSDIDGEVTLKTEKSITGREITWIIVKNITRATHTVLPGMILVVKDGQEVEKGQDLTKEMTIDPVYAPFDGHVEIDELSNTITLKPLTTSKDQPVVFTIPYGAKILVSNGQKVKKGDQITTSTSLPAVKASISGTVRFGSNLNIRALEDGNFEVLSTGEVYVEQVIEERKYPVFEGALVYVNNGDQVKKGDHLADRFLFEEEYLSATEYKIFESHYPTMFDVEERTENDRPIVVITDIDPEVSKETGLKVGDIVTENEYEAYLQIYPEKIVADAGAQAIKKLLQNLDLEALQAEIEAELKKLPSSSSKAIKLRRRLKMVKDFLKSGNKPEWMVLEVVPVIPPDLRPMIQIEGGRFATTDLNELYRRLINRNNRLKKLLELGAPEIILRNEKRMLQEAVDALIHNGSDSEGKRSRRAVLKDRNGRPLKSLTDLLKGKKGRFRRNLLGKRVDYSGRAVIVVGPNLKIHQCGIPKKMAMELFKPFVLAKLLGEGSSSKTMRKVKKAIIEKEMPEAWEVLEEVIKGSVVLLNRAPTLHRMSIQAFEPKLVEGNAIQLHPVVCPPFNADFDGDQMAVHVPLSAAAQAEARFLMLSRYNIISPAHGKPISLPTQDIIIGSYYLTTVGKEFDSLKEEDVKWKFSSPEEAMLAYHLGFIKLHTPILIKVAVNGEEKRIKTTLGRVIFNGILPEDLRDYNRIFDKKQINALVYETFKRHGIDRAADLLDDIKDIGFHYATVSGLTLSLKDLKIPPERDEILRKTWEKVRIIEENYEKGFLTEEQRKSEIIRLWMSVTEEITKLTSKTLAEDPFNPIYMMVNSGARGNIDQVKQLAGIRGLMIKAYDPRSREIKSKIFKGQAIHEALTFDYPVDKNLREGVDILQFFISTYGARKGQVDTAMNTSFAGYLTRRLVDVAQSVTVAEPDCGTHEGIRAMDLIKEGTVVEKMNEFLFGRVLARDVLDPETKEVLKNPETGKEYTRNTMLTDDDANFLASYKKMVDVVRYEEIDITELSLPNMYAEIAEPVGEYEEGTELTWDVIKAAKNEGKYRIKVKVYPVVGTVYAEEEPLYDKKGERQLLVYQEVINEIVAKMLEENGIEKVSVRPDIIVRSPLTCESEYGVCAACYGMDLSNHKIVNVGEAVGVVAAQSIGEPGTQLTMRTFHVGGVMGASDIVSGLTTVEKTFEPYAFLREEKSGGKKEIRKYYGSEAILCEVDGFVKDIATDESGRTVIYIEDYAGNIHAYKVPKRAKVRVEKGQKVLRGETLTSGAIVWWKLLELESEKGVMTAMNLLKIIKNAYVQQGVSIHDKHFEIIFKQMLSMATIVDPGDSDYLPDQLVPLVDIKRFNREILEGNAKVEENRKWVIGKTLAKRIITETEEGELVELAQKGDEVTEELLKKIIEAGIKEIDVFEKDKVVTYQILPKEPIKYKRRLLSLKKAALNYPGWLSAAAFEETAWVLTAAAIEGKVDPLIGLKENVIVGQLIPAGTGLDVFAGIQVEETPRAAVEEELA</sequence>
<name>RPOC_THEMA</name>